<dbReference type="EC" id="2.1.1.199" evidence="1"/>
<dbReference type="EMBL" id="AP011115">
    <property type="protein sequence ID" value="BAH49071.1"/>
    <property type="molecule type" value="Genomic_DNA"/>
</dbReference>
<dbReference type="RefSeq" id="WP_012688066.1">
    <property type="nucleotide sequence ID" value="NC_012522.1"/>
</dbReference>
<dbReference type="SMR" id="C1AU63"/>
<dbReference type="STRING" id="632772.ROP_08240"/>
<dbReference type="KEGG" id="rop:ROP_08240"/>
<dbReference type="PATRIC" id="fig|632772.20.peg.887"/>
<dbReference type="HOGENOM" id="CLU_038422_0_0_11"/>
<dbReference type="OrthoDB" id="9806637at2"/>
<dbReference type="Proteomes" id="UP000002212">
    <property type="component" value="Chromosome"/>
</dbReference>
<dbReference type="GO" id="GO:0005737">
    <property type="term" value="C:cytoplasm"/>
    <property type="evidence" value="ECO:0007669"/>
    <property type="project" value="UniProtKB-SubCell"/>
</dbReference>
<dbReference type="GO" id="GO:0071424">
    <property type="term" value="F:rRNA (cytosine-N4-)-methyltransferase activity"/>
    <property type="evidence" value="ECO:0007669"/>
    <property type="project" value="UniProtKB-UniRule"/>
</dbReference>
<dbReference type="GO" id="GO:0070475">
    <property type="term" value="P:rRNA base methylation"/>
    <property type="evidence" value="ECO:0007669"/>
    <property type="project" value="UniProtKB-UniRule"/>
</dbReference>
<dbReference type="FunFam" id="1.10.150.170:FF:000001">
    <property type="entry name" value="Ribosomal RNA small subunit methyltransferase H"/>
    <property type="match status" value="1"/>
</dbReference>
<dbReference type="Gene3D" id="1.10.150.170">
    <property type="entry name" value="Putative methyltransferase TM0872, insert domain"/>
    <property type="match status" value="1"/>
</dbReference>
<dbReference type="Gene3D" id="3.40.50.150">
    <property type="entry name" value="Vaccinia Virus protein VP39"/>
    <property type="match status" value="1"/>
</dbReference>
<dbReference type="HAMAP" id="MF_01007">
    <property type="entry name" value="16SrRNA_methyltr_H"/>
    <property type="match status" value="1"/>
</dbReference>
<dbReference type="InterPro" id="IPR002903">
    <property type="entry name" value="RsmH"/>
</dbReference>
<dbReference type="InterPro" id="IPR023397">
    <property type="entry name" value="SAM-dep_MeTrfase_MraW_recog"/>
</dbReference>
<dbReference type="InterPro" id="IPR029063">
    <property type="entry name" value="SAM-dependent_MTases_sf"/>
</dbReference>
<dbReference type="NCBIfam" id="TIGR00006">
    <property type="entry name" value="16S rRNA (cytosine(1402)-N(4))-methyltransferase RsmH"/>
    <property type="match status" value="1"/>
</dbReference>
<dbReference type="PANTHER" id="PTHR11265:SF0">
    <property type="entry name" value="12S RRNA N4-METHYLCYTIDINE METHYLTRANSFERASE"/>
    <property type="match status" value="1"/>
</dbReference>
<dbReference type="PANTHER" id="PTHR11265">
    <property type="entry name" value="S-ADENOSYL-METHYLTRANSFERASE MRAW"/>
    <property type="match status" value="1"/>
</dbReference>
<dbReference type="Pfam" id="PF01795">
    <property type="entry name" value="Methyltransf_5"/>
    <property type="match status" value="1"/>
</dbReference>
<dbReference type="PIRSF" id="PIRSF004486">
    <property type="entry name" value="MraW"/>
    <property type="match status" value="1"/>
</dbReference>
<dbReference type="SUPFAM" id="SSF81799">
    <property type="entry name" value="Putative methyltransferase TM0872, insert domain"/>
    <property type="match status" value="1"/>
</dbReference>
<dbReference type="SUPFAM" id="SSF53335">
    <property type="entry name" value="S-adenosyl-L-methionine-dependent methyltransferases"/>
    <property type="match status" value="1"/>
</dbReference>
<reference key="1">
    <citation type="submission" date="2009-03" db="EMBL/GenBank/DDBJ databases">
        <title>Comparison of the complete genome sequences of Rhodococcus erythropolis PR4 and Rhodococcus opacus B4.</title>
        <authorList>
            <person name="Takarada H."/>
            <person name="Sekine M."/>
            <person name="Hosoyama A."/>
            <person name="Yamada R."/>
            <person name="Fujisawa T."/>
            <person name="Omata S."/>
            <person name="Shimizu A."/>
            <person name="Tsukatani N."/>
            <person name="Tanikawa S."/>
            <person name="Fujita N."/>
            <person name="Harayama S."/>
        </authorList>
    </citation>
    <scope>NUCLEOTIDE SEQUENCE [LARGE SCALE GENOMIC DNA]</scope>
    <source>
        <strain>B4</strain>
    </source>
</reference>
<protein>
    <recommendedName>
        <fullName evidence="1">Ribosomal RNA small subunit methyltransferase H</fullName>
        <ecNumber evidence="1">2.1.1.199</ecNumber>
    </recommendedName>
    <alternativeName>
        <fullName evidence="1">16S rRNA m(4)C1402 methyltransferase</fullName>
    </alternativeName>
    <alternativeName>
        <fullName evidence="1">rRNA (cytosine-N(4)-)-methyltransferase RsmH</fullName>
    </alternativeName>
</protein>
<comment type="function">
    <text evidence="1">Specifically methylates the N4 position of cytidine in position 1402 (C1402) of 16S rRNA.</text>
</comment>
<comment type="catalytic activity">
    <reaction evidence="1">
        <text>cytidine(1402) in 16S rRNA + S-adenosyl-L-methionine = N(4)-methylcytidine(1402) in 16S rRNA + S-adenosyl-L-homocysteine + H(+)</text>
        <dbReference type="Rhea" id="RHEA:42928"/>
        <dbReference type="Rhea" id="RHEA-COMP:10286"/>
        <dbReference type="Rhea" id="RHEA-COMP:10287"/>
        <dbReference type="ChEBI" id="CHEBI:15378"/>
        <dbReference type="ChEBI" id="CHEBI:57856"/>
        <dbReference type="ChEBI" id="CHEBI:59789"/>
        <dbReference type="ChEBI" id="CHEBI:74506"/>
        <dbReference type="ChEBI" id="CHEBI:82748"/>
        <dbReference type="EC" id="2.1.1.199"/>
    </reaction>
</comment>
<comment type="subcellular location">
    <subcellularLocation>
        <location evidence="1">Cytoplasm</location>
    </subcellularLocation>
</comment>
<comment type="similarity">
    <text evidence="1">Belongs to the methyltransferase superfamily. RsmH family.</text>
</comment>
<evidence type="ECO:0000255" key="1">
    <source>
        <dbReference type="HAMAP-Rule" id="MF_01007"/>
    </source>
</evidence>
<evidence type="ECO:0000256" key="2">
    <source>
        <dbReference type="SAM" id="MobiDB-lite"/>
    </source>
</evidence>
<name>RSMH_RHOOB</name>
<keyword id="KW-0963">Cytoplasm</keyword>
<keyword id="KW-0489">Methyltransferase</keyword>
<keyword id="KW-0698">rRNA processing</keyword>
<keyword id="KW-0949">S-adenosyl-L-methionine</keyword>
<keyword id="KW-0808">Transferase</keyword>
<accession>C1AU63</accession>
<organism>
    <name type="scientific">Rhodococcus opacus (strain B4)</name>
    <dbReference type="NCBI Taxonomy" id="632772"/>
    <lineage>
        <taxon>Bacteria</taxon>
        <taxon>Bacillati</taxon>
        <taxon>Actinomycetota</taxon>
        <taxon>Actinomycetes</taxon>
        <taxon>Mycobacteriales</taxon>
        <taxon>Nocardiaceae</taxon>
        <taxon>Rhodococcus</taxon>
    </lineage>
</organism>
<proteinExistence type="inferred from homology"/>
<feature type="chain" id="PRO_0000387077" description="Ribosomal RNA small subunit methyltransferase H">
    <location>
        <begin position="1"/>
        <end position="338"/>
    </location>
</feature>
<feature type="region of interest" description="Disordered" evidence="2">
    <location>
        <begin position="277"/>
        <end position="298"/>
    </location>
</feature>
<feature type="binding site" evidence="1">
    <location>
        <begin position="53"/>
        <end position="55"/>
    </location>
    <ligand>
        <name>S-adenosyl-L-methionine</name>
        <dbReference type="ChEBI" id="CHEBI:59789"/>
    </ligand>
</feature>
<feature type="binding site" evidence="1">
    <location>
        <position position="72"/>
    </location>
    <ligand>
        <name>S-adenosyl-L-methionine</name>
        <dbReference type="ChEBI" id="CHEBI:59789"/>
    </ligand>
</feature>
<feature type="binding site" evidence="1">
    <location>
        <position position="99"/>
    </location>
    <ligand>
        <name>S-adenosyl-L-methionine</name>
        <dbReference type="ChEBI" id="CHEBI:59789"/>
    </ligand>
</feature>
<feature type="binding site" evidence="1">
    <location>
        <position position="123"/>
    </location>
    <ligand>
        <name>S-adenosyl-L-methionine</name>
        <dbReference type="ChEBI" id="CHEBI:59789"/>
    </ligand>
</feature>
<feature type="binding site" evidence="1">
    <location>
        <position position="130"/>
    </location>
    <ligand>
        <name>S-adenosyl-L-methionine</name>
        <dbReference type="ChEBI" id="CHEBI:59789"/>
    </ligand>
</feature>
<sequence>MVDHEGEDSSPADGFGHIPVLLHRADELLGPALTANDPHGGGAVMIDATLGLGGHSEHFLRTYPQLRLVALDRDPHALEIAGGRLAPFADRITFVHTRYDGIEDALTQAGLSPRESVHGILFDLGVSSMQLDESDRGFAYSIDAPLDMRMDPTTGITAAEVLNTYSHGDLARILSTYGEERFAGKIASEVVRQRAKEPFTTSAALVELLYRTIPAATRRTGGHPAKRTFQALRVEVNGELDSLRAAVPAALDALTVGGRVVFMSYQSLEDRVVKQEITPRSKSKSPEGLPVELPGMGPEFRILTRGAERASEQEIEENPRSAPVRLRAAERIARRSAA</sequence>
<gene>
    <name evidence="1" type="primary">rsmH</name>
    <name type="synonym">mraW</name>
    <name type="ordered locus">ROP_08240</name>
</gene>